<evidence type="ECO:0000255" key="1">
    <source>
        <dbReference type="HAMAP-Rule" id="MF_00109"/>
    </source>
</evidence>
<organism>
    <name type="scientific">Shewanella loihica (strain ATCC BAA-1088 / PV-4)</name>
    <dbReference type="NCBI Taxonomy" id="323850"/>
    <lineage>
        <taxon>Bacteria</taxon>
        <taxon>Pseudomonadati</taxon>
        <taxon>Pseudomonadota</taxon>
        <taxon>Gammaproteobacteria</taxon>
        <taxon>Alteromonadales</taxon>
        <taxon>Shewanellaceae</taxon>
        <taxon>Shewanella</taxon>
    </lineage>
</organism>
<keyword id="KW-0028">Amino-acid biosynthesis</keyword>
<keyword id="KW-0057">Aromatic amino acid biosynthesis</keyword>
<keyword id="KW-0067">ATP-binding</keyword>
<keyword id="KW-0963">Cytoplasm</keyword>
<keyword id="KW-0418">Kinase</keyword>
<keyword id="KW-0460">Magnesium</keyword>
<keyword id="KW-0479">Metal-binding</keyword>
<keyword id="KW-0547">Nucleotide-binding</keyword>
<keyword id="KW-1185">Reference proteome</keyword>
<keyword id="KW-0808">Transferase</keyword>
<accession>A3Q9D7</accession>
<comment type="function">
    <text evidence="1">Catalyzes the specific phosphorylation of the 3-hydroxyl group of shikimic acid using ATP as a cosubstrate.</text>
</comment>
<comment type="catalytic activity">
    <reaction evidence="1">
        <text>shikimate + ATP = 3-phosphoshikimate + ADP + H(+)</text>
        <dbReference type="Rhea" id="RHEA:13121"/>
        <dbReference type="ChEBI" id="CHEBI:15378"/>
        <dbReference type="ChEBI" id="CHEBI:30616"/>
        <dbReference type="ChEBI" id="CHEBI:36208"/>
        <dbReference type="ChEBI" id="CHEBI:145989"/>
        <dbReference type="ChEBI" id="CHEBI:456216"/>
        <dbReference type="EC" id="2.7.1.71"/>
    </reaction>
</comment>
<comment type="cofactor">
    <cofactor evidence="1">
        <name>Mg(2+)</name>
        <dbReference type="ChEBI" id="CHEBI:18420"/>
    </cofactor>
    <text evidence="1">Binds 1 Mg(2+) ion per subunit.</text>
</comment>
<comment type="pathway">
    <text evidence="1">Metabolic intermediate biosynthesis; chorismate biosynthesis; chorismate from D-erythrose 4-phosphate and phosphoenolpyruvate: step 5/7.</text>
</comment>
<comment type="subunit">
    <text evidence="1">Monomer.</text>
</comment>
<comment type="subcellular location">
    <subcellularLocation>
        <location evidence="1">Cytoplasm</location>
    </subcellularLocation>
</comment>
<comment type="similarity">
    <text evidence="1">Belongs to the shikimate kinase family.</text>
</comment>
<feature type="chain" id="PRO_1000022997" description="Shikimate kinase">
    <location>
        <begin position="1"/>
        <end position="171"/>
    </location>
</feature>
<feature type="binding site" evidence="1">
    <location>
        <begin position="14"/>
        <end position="19"/>
    </location>
    <ligand>
        <name>ATP</name>
        <dbReference type="ChEBI" id="CHEBI:30616"/>
    </ligand>
</feature>
<feature type="binding site" evidence="1">
    <location>
        <position position="18"/>
    </location>
    <ligand>
        <name>Mg(2+)</name>
        <dbReference type="ChEBI" id="CHEBI:18420"/>
    </ligand>
</feature>
<feature type="binding site" evidence="1">
    <location>
        <position position="36"/>
    </location>
    <ligand>
        <name>substrate</name>
    </ligand>
</feature>
<feature type="binding site" evidence="1">
    <location>
        <position position="60"/>
    </location>
    <ligand>
        <name>substrate</name>
    </ligand>
</feature>
<feature type="binding site" evidence="1">
    <location>
        <position position="82"/>
    </location>
    <ligand>
        <name>substrate</name>
    </ligand>
</feature>
<feature type="binding site" evidence="1">
    <location>
        <position position="120"/>
    </location>
    <ligand>
        <name>ATP</name>
        <dbReference type="ChEBI" id="CHEBI:30616"/>
    </ligand>
</feature>
<feature type="binding site" evidence="1">
    <location>
        <position position="139"/>
    </location>
    <ligand>
        <name>substrate</name>
    </ligand>
</feature>
<feature type="binding site" evidence="1">
    <location>
        <position position="156"/>
    </location>
    <ligand>
        <name>ATP</name>
        <dbReference type="ChEBI" id="CHEBI:30616"/>
    </ligand>
</feature>
<reference key="1">
    <citation type="submission" date="2007-03" db="EMBL/GenBank/DDBJ databases">
        <title>Complete sequence of Shewanella loihica PV-4.</title>
        <authorList>
            <consortium name="US DOE Joint Genome Institute"/>
            <person name="Copeland A."/>
            <person name="Lucas S."/>
            <person name="Lapidus A."/>
            <person name="Barry K."/>
            <person name="Detter J.C."/>
            <person name="Glavina del Rio T."/>
            <person name="Hammon N."/>
            <person name="Israni S."/>
            <person name="Dalin E."/>
            <person name="Tice H."/>
            <person name="Pitluck S."/>
            <person name="Chain P."/>
            <person name="Malfatti S."/>
            <person name="Shin M."/>
            <person name="Vergez L."/>
            <person name="Schmutz J."/>
            <person name="Larimer F."/>
            <person name="Land M."/>
            <person name="Hauser L."/>
            <person name="Kyrpides N."/>
            <person name="Mikhailova N."/>
            <person name="Romine M.F."/>
            <person name="Serres G."/>
            <person name="Fredrickson J."/>
            <person name="Tiedje J."/>
            <person name="Richardson P."/>
        </authorList>
    </citation>
    <scope>NUCLEOTIDE SEQUENCE [LARGE SCALE GENOMIC DNA]</scope>
    <source>
        <strain>ATCC BAA-1088 / PV-4</strain>
    </source>
</reference>
<name>AROK_SHELP</name>
<protein>
    <recommendedName>
        <fullName evidence="1">Shikimate kinase</fullName>
        <shortName evidence="1">SK</shortName>
        <ecNumber evidence="1">2.7.1.71</ecNumber>
    </recommendedName>
</protein>
<proteinExistence type="inferred from homology"/>
<sequence>MAEKRNIFLVGPMGAGKSTIGRHLAQMLHLEFHDSDQEIENRTGADIAWVFDVEGEEGFRRRETQVVADLTEKQGIVLATGGGSIQSKDIRNNLSARGIVVYLETTIDKQVARTQRDKRRPLLQVEDPREVLEKLAEIRNPLYEEIADVIVKTDEQSAKVVANQIIDQLGF</sequence>
<gene>
    <name evidence="1" type="primary">aroK</name>
    <name type="ordered locus">Shew_0213</name>
</gene>
<dbReference type="EC" id="2.7.1.71" evidence="1"/>
<dbReference type="EMBL" id="CP000606">
    <property type="protein sequence ID" value="ABO22085.1"/>
    <property type="molecule type" value="Genomic_DNA"/>
</dbReference>
<dbReference type="RefSeq" id="WP_011864020.1">
    <property type="nucleotide sequence ID" value="NC_009092.1"/>
</dbReference>
<dbReference type="SMR" id="A3Q9D7"/>
<dbReference type="STRING" id="323850.Shew_0213"/>
<dbReference type="KEGG" id="slo:Shew_0213"/>
<dbReference type="eggNOG" id="COG0703">
    <property type="taxonomic scope" value="Bacteria"/>
</dbReference>
<dbReference type="HOGENOM" id="CLU_057607_2_2_6"/>
<dbReference type="OrthoDB" id="9800332at2"/>
<dbReference type="UniPathway" id="UPA00053">
    <property type="reaction ID" value="UER00088"/>
</dbReference>
<dbReference type="Proteomes" id="UP000001558">
    <property type="component" value="Chromosome"/>
</dbReference>
<dbReference type="GO" id="GO:0005829">
    <property type="term" value="C:cytosol"/>
    <property type="evidence" value="ECO:0007669"/>
    <property type="project" value="TreeGrafter"/>
</dbReference>
<dbReference type="GO" id="GO:0005524">
    <property type="term" value="F:ATP binding"/>
    <property type="evidence" value="ECO:0007669"/>
    <property type="project" value="UniProtKB-UniRule"/>
</dbReference>
<dbReference type="GO" id="GO:0000287">
    <property type="term" value="F:magnesium ion binding"/>
    <property type="evidence" value="ECO:0007669"/>
    <property type="project" value="UniProtKB-UniRule"/>
</dbReference>
<dbReference type="GO" id="GO:0004765">
    <property type="term" value="F:shikimate kinase activity"/>
    <property type="evidence" value="ECO:0007669"/>
    <property type="project" value="UniProtKB-UniRule"/>
</dbReference>
<dbReference type="GO" id="GO:0008652">
    <property type="term" value="P:amino acid biosynthetic process"/>
    <property type="evidence" value="ECO:0007669"/>
    <property type="project" value="UniProtKB-KW"/>
</dbReference>
<dbReference type="GO" id="GO:0009073">
    <property type="term" value="P:aromatic amino acid family biosynthetic process"/>
    <property type="evidence" value="ECO:0007669"/>
    <property type="project" value="UniProtKB-KW"/>
</dbReference>
<dbReference type="GO" id="GO:0009423">
    <property type="term" value="P:chorismate biosynthetic process"/>
    <property type="evidence" value="ECO:0007669"/>
    <property type="project" value="UniProtKB-UniRule"/>
</dbReference>
<dbReference type="CDD" id="cd00464">
    <property type="entry name" value="SK"/>
    <property type="match status" value="1"/>
</dbReference>
<dbReference type="FunFam" id="3.40.50.300:FF:000099">
    <property type="entry name" value="Shikimate kinase 1"/>
    <property type="match status" value="1"/>
</dbReference>
<dbReference type="Gene3D" id="3.40.50.300">
    <property type="entry name" value="P-loop containing nucleotide triphosphate hydrolases"/>
    <property type="match status" value="1"/>
</dbReference>
<dbReference type="HAMAP" id="MF_00109">
    <property type="entry name" value="Shikimate_kinase"/>
    <property type="match status" value="1"/>
</dbReference>
<dbReference type="InterPro" id="IPR027417">
    <property type="entry name" value="P-loop_NTPase"/>
</dbReference>
<dbReference type="InterPro" id="IPR031322">
    <property type="entry name" value="Shikimate/glucono_kinase"/>
</dbReference>
<dbReference type="InterPro" id="IPR000623">
    <property type="entry name" value="Shikimate_kinase/TSH1"/>
</dbReference>
<dbReference type="InterPro" id="IPR023000">
    <property type="entry name" value="Shikimate_kinase_CS"/>
</dbReference>
<dbReference type="NCBIfam" id="NF003456">
    <property type="entry name" value="PRK05057.1"/>
    <property type="match status" value="1"/>
</dbReference>
<dbReference type="PANTHER" id="PTHR21087">
    <property type="entry name" value="SHIKIMATE KINASE"/>
    <property type="match status" value="1"/>
</dbReference>
<dbReference type="PANTHER" id="PTHR21087:SF16">
    <property type="entry name" value="SHIKIMATE KINASE 1, CHLOROPLASTIC"/>
    <property type="match status" value="1"/>
</dbReference>
<dbReference type="Pfam" id="PF01202">
    <property type="entry name" value="SKI"/>
    <property type="match status" value="1"/>
</dbReference>
<dbReference type="PRINTS" id="PR01100">
    <property type="entry name" value="SHIKIMTKNASE"/>
</dbReference>
<dbReference type="SUPFAM" id="SSF52540">
    <property type="entry name" value="P-loop containing nucleoside triphosphate hydrolases"/>
    <property type="match status" value="1"/>
</dbReference>
<dbReference type="PROSITE" id="PS01128">
    <property type="entry name" value="SHIKIMATE_KINASE"/>
    <property type="match status" value="1"/>
</dbReference>